<organism>
    <name type="scientific">Porphyromonas gingivalis (strain ATCC 33277 / DSM 20709 / CIP 103683 / JCM 12257 / NCTC 11834 / 2561)</name>
    <dbReference type="NCBI Taxonomy" id="431947"/>
    <lineage>
        <taxon>Bacteria</taxon>
        <taxon>Pseudomonadati</taxon>
        <taxon>Bacteroidota</taxon>
        <taxon>Bacteroidia</taxon>
        <taxon>Bacteroidales</taxon>
        <taxon>Porphyromonadaceae</taxon>
        <taxon>Porphyromonas</taxon>
    </lineage>
</organism>
<accession>B2RJV4</accession>
<evidence type="ECO:0000255" key="1">
    <source>
        <dbReference type="HAMAP-Rule" id="MF_00037"/>
    </source>
</evidence>
<protein>
    <recommendedName>
        <fullName evidence="1">UDP-N-acetylenolpyruvoylglucosamine reductase</fullName>
        <ecNumber evidence="1">1.3.1.98</ecNumber>
    </recommendedName>
    <alternativeName>
        <fullName evidence="1">UDP-N-acetylmuramate dehydrogenase</fullName>
    </alternativeName>
</protein>
<reference key="1">
    <citation type="journal article" date="2008" name="DNA Res.">
        <title>Determination of the genome sequence of Porphyromonas gingivalis strain ATCC 33277 and genomic comparison with strain W83 revealed extensive genome rearrangements in P. gingivalis.</title>
        <authorList>
            <person name="Naito M."/>
            <person name="Hirakawa H."/>
            <person name="Yamashita A."/>
            <person name="Ohara N."/>
            <person name="Shoji M."/>
            <person name="Yukitake H."/>
            <person name="Nakayama K."/>
            <person name="Toh H."/>
            <person name="Yoshimura F."/>
            <person name="Kuhara S."/>
            <person name="Hattori M."/>
            <person name="Hayashi T."/>
            <person name="Nakayama K."/>
        </authorList>
    </citation>
    <scope>NUCLEOTIDE SEQUENCE [LARGE SCALE GENOMIC DNA]</scope>
    <source>
        <strain>ATCC 33277 / DSM 20709 / CIP 103683 / JCM 12257 / NCTC 11834 / 2561</strain>
    </source>
</reference>
<comment type="function">
    <text evidence="1">Cell wall formation.</text>
</comment>
<comment type="catalytic activity">
    <reaction evidence="1">
        <text>UDP-N-acetyl-alpha-D-muramate + NADP(+) = UDP-N-acetyl-3-O-(1-carboxyvinyl)-alpha-D-glucosamine + NADPH + H(+)</text>
        <dbReference type="Rhea" id="RHEA:12248"/>
        <dbReference type="ChEBI" id="CHEBI:15378"/>
        <dbReference type="ChEBI" id="CHEBI:57783"/>
        <dbReference type="ChEBI" id="CHEBI:58349"/>
        <dbReference type="ChEBI" id="CHEBI:68483"/>
        <dbReference type="ChEBI" id="CHEBI:70757"/>
        <dbReference type="EC" id="1.3.1.98"/>
    </reaction>
</comment>
<comment type="cofactor">
    <cofactor evidence="1">
        <name>FAD</name>
        <dbReference type="ChEBI" id="CHEBI:57692"/>
    </cofactor>
</comment>
<comment type="pathway">
    <text evidence="1">Cell wall biogenesis; peptidoglycan biosynthesis.</text>
</comment>
<comment type="subcellular location">
    <subcellularLocation>
        <location evidence="1">Cytoplasm</location>
    </subcellularLocation>
</comment>
<comment type="similarity">
    <text evidence="1">Belongs to the MurB family.</text>
</comment>
<dbReference type="EC" id="1.3.1.98" evidence="1"/>
<dbReference type="EMBL" id="AP009380">
    <property type="protein sequence ID" value="BAG33649.1"/>
    <property type="molecule type" value="Genomic_DNA"/>
</dbReference>
<dbReference type="RefSeq" id="WP_004585516.1">
    <property type="nucleotide sequence ID" value="NC_010729.1"/>
</dbReference>
<dbReference type="SMR" id="B2RJV4"/>
<dbReference type="GeneID" id="29256337"/>
<dbReference type="KEGG" id="pgn:PGN_1130"/>
<dbReference type="eggNOG" id="COG0812">
    <property type="taxonomic scope" value="Bacteria"/>
</dbReference>
<dbReference type="HOGENOM" id="CLU_035304_0_0_10"/>
<dbReference type="OrthoDB" id="9804753at2"/>
<dbReference type="BioCyc" id="PGIN431947:G1G2V-1291-MONOMER"/>
<dbReference type="UniPathway" id="UPA00219"/>
<dbReference type="Proteomes" id="UP000008842">
    <property type="component" value="Chromosome"/>
</dbReference>
<dbReference type="GO" id="GO:0005829">
    <property type="term" value="C:cytosol"/>
    <property type="evidence" value="ECO:0007669"/>
    <property type="project" value="TreeGrafter"/>
</dbReference>
<dbReference type="GO" id="GO:0071949">
    <property type="term" value="F:FAD binding"/>
    <property type="evidence" value="ECO:0007669"/>
    <property type="project" value="InterPro"/>
</dbReference>
<dbReference type="GO" id="GO:0008762">
    <property type="term" value="F:UDP-N-acetylmuramate dehydrogenase activity"/>
    <property type="evidence" value="ECO:0007669"/>
    <property type="project" value="UniProtKB-UniRule"/>
</dbReference>
<dbReference type="GO" id="GO:0051301">
    <property type="term" value="P:cell division"/>
    <property type="evidence" value="ECO:0007669"/>
    <property type="project" value="UniProtKB-KW"/>
</dbReference>
<dbReference type="GO" id="GO:0071555">
    <property type="term" value="P:cell wall organization"/>
    <property type="evidence" value="ECO:0007669"/>
    <property type="project" value="UniProtKB-KW"/>
</dbReference>
<dbReference type="GO" id="GO:0009252">
    <property type="term" value="P:peptidoglycan biosynthetic process"/>
    <property type="evidence" value="ECO:0007669"/>
    <property type="project" value="UniProtKB-UniRule"/>
</dbReference>
<dbReference type="GO" id="GO:0008360">
    <property type="term" value="P:regulation of cell shape"/>
    <property type="evidence" value="ECO:0007669"/>
    <property type="project" value="UniProtKB-KW"/>
</dbReference>
<dbReference type="Gene3D" id="3.30.465.10">
    <property type="match status" value="1"/>
</dbReference>
<dbReference type="Gene3D" id="3.90.78.10">
    <property type="entry name" value="UDP-N-acetylenolpyruvoylglucosamine reductase, C-terminal domain"/>
    <property type="match status" value="1"/>
</dbReference>
<dbReference type="Gene3D" id="3.30.43.10">
    <property type="entry name" value="Uridine Diphospho-n-acetylenolpyruvylglucosamine Reductase, domain 2"/>
    <property type="match status" value="1"/>
</dbReference>
<dbReference type="HAMAP" id="MF_00037">
    <property type="entry name" value="MurB"/>
    <property type="match status" value="1"/>
</dbReference>
<dbReference type="InterPro" id="IPR016166">
    <property type="entry name" value="FAD-bd_PCMH"/>
</dbReference>
<dbReference type="InterPro" id="IPR036318">
    <property type="entry name" value="FAD-bd_PCMH-like_sf"/>
</dbReference>
<dbReference type="InterPro" id="IPR016167">
    <property type="entry name" value="FAD-bd_PCMH_sub1"/>
</dbReference>
<dbReference type="InterPro" id="IPR016169">
    <property type="entry name" value="FAD-bd_PCMH_sub2"/>
</dbReference>
<dbReference type="InterPro" id="IPR003170">
    <property type="entry name" value="MurB"/>
</dbReference>
<dbReference type="InterPro" id="IPR011601">
    <property type="entry name" value="MurB_C"/>
</dbReference>
<dbReference type="InterPro" id="IPR036635">
    <property type="entry name" value="MurB_C_sf"/>
</dbReference>
<dbReference type="InterPro" id="IPR006094">
    <property type="entry name" value="Oxid_FAD_bind_N"/>
</dbReference>
<dbReference type="NCBIfam" id="TIGR00179">
    <property type="entry name" value="murB"/>
    <property type="match status" value="1"/>
</dbReference>
<dbReference type="NCBIfam" id="NF000755">
    <property type="entry name" value="PRK00046.1"/>
    <property type="match status" value="1"/>
</dbReference>
<dbReference type="PANTHER" id="PTHR21071">
    <property type="entry name" value="UDP-N-ACETYLENOLPYRUVOYLGLUCOSAMINE REDUCTASE"/>
    <property type="match status" value="1"/>
</dbReference>
<dbReference type="PANTHER" id="PTHR21071:SF4">
    <property type="entry name" value="UDP-N-ACETYLENOLPYRUVOYLGLUCOSAMINE REDUCTASE"/>
    <property type="match status" value="1"/>
</dbReference>
<dbReference type="Pfam" id="PF01565">
    <property type="entry name" value="FAD_binding_4"/>
    <property type="match status" value="1"/>
</dbReference>
<dbReference type="Pfam" id="PF02873">
    <property type="entry name" value="MurB_C"/>
    <property type="match status" value="1"/>
</dbReference>
<dbReference type="SUPFAM" id="SSF56176">
    <property type="entry name" value="FAD-binding/transporter-associated domain-like"/>
    <property type="match status" value="1"/>
</dbReference>
<dbReference type="SUPFAM" id="SSF56194">
    <property type="entry name" value="Uridine diphospho-N-Acetylenolpyruvylglucosamine reductase, MurB, C-terminal domain"/>
    <property type="match status" value="1"/>
</dbReference>
<dbReference type="PROSITE" id="PS51387">
    <property type="entry name" value="FAD_PCMH"/>
    <property type="match status" value="1"/>
</dbReference>
<proteinExistence type="inferred from homology"/>
<name>MURB_PORG3</name>
<gene>
    <name evidence="1" type="primary">murB</name>
    <name type="ordered locus">PGN_1130</name>
</gene>
<feature type="chain" id="PRO_1000191439" description="UDP-N-acetylenolpyruvoylglucosamine reductase">
    <location>
        <begin position="1"/>
        <end position="338"/>
    </location>
</feature>
<feature type="domain" description="FAD-binding PCMH-type" evidence="1">
    <location>
        <begin position="17"/>
        <end position="188"/>
    </location>
</feature>
<feature type="active site" evidence="1">
    <location>
        <position position="164"/>
    </location>
</feature>
<feature type="active site" description="Proton donor" evidence="1">
    <location>
        <position position="237"/>
    </location>
</feature>
<feature type="active site" evidence="1">
    <location>
        <position position="333"/>
    </location>
</feature>
<sequence>MDIRQDYPLSKRNTFGIAARTDWWIDYTCDADIDRLVKDEFFQECRVQTIGEGSNLLFLANFHGILLHSEVKGITELHKDQDSILLRVGSGMVWDDFVAYAVENNYYGIENLSLIPGQVGASAVQNIGAYGVEVSQLIEAVHARHYRTGESRVFRNEDCRYAYRYSIFKEPDYAEWAIMYVDYRLRLRPSFSLEYKALAKVLEEERITPTLQSIRDTVIRIRNSKLPDPATIGNAGSFFVNPVVSAEKFNTLQTEYPSIPSYPQPDGSVKVPAGWLIEQCGYKGHRSGAVGVYEHQALVLVNYGGATGTQVGALAEEIIGNVRQKFGITLHPEVKYIL</sequence>
<keyword id="KW-0131">Cell cycle</keyword>
<keyword id="KW-0132">Cell division</keyword>
<keyword id="KW-0133">Cell shape</keyword>
<keyword id="KW-0961">Cell wall biogenesis/degradation</keyword>
<keyword id="KW-0963">Cytoplasm</keyword>
<keyword id="KW-0274">FAD</keyword>
<keyword id="KW-0285">Flavoprotein</keyword>
<keyword id="KW-0521">NADP</keyword>
<keyword id="KW-0560">Oxidoreductase</keyword>
<keyword id="KW-0573">Peptidoglycan synthesis</keyword>